<protein>
    <recommendedName>
        <fullName>Embryonic polyadenylate-binding protein 2-B</fullName>
        <shortName>Embryonic poly(A)-binding protein 2-B</shortName>
        <shortName>XePABP2-B</shortName>
        <shortName>ePABP-2B</shortName>
        <shortName>ePABP2-B</shortName>
    </recommendedName>
    <alternativeName>
        <fullName>Embryonic poly(A)-binding protein type II-B</fullName>
    </alternativeName>
</protein>
<reference evidence="6 7" key="1">
    <citation type="journal article" date="2004" name="Genesis">
        <title>Xenopus embryonic poly(A) binding protein 2 (ePABP2) defines a new family of cytoplasmic poly(A) binding proteins expressed during the early stages of vertebrate development.</title>
        <authorList>
            <person name="Good P.J."/>
            <person name="Abler L."/>
            <person name="Herring D."/>
            <person name="Sheets M.D."/>
        </authorList>
    </citation>
    <scope>NUCLEOTIDE SEQUENCE [MRNA]</scope>
    <scope>FUNCTION</scope>
    <scope>SUBCELLULAR LOCATION</scope>
    <scope>DEVELOPMENTAL STAGE</scope>
    <source>
        <tissue evidence="4">Oocyte</tissue>
    </source>
</reference>
<reference key="2">
    <citation type="journal article" date="2008" name="Proc. Natl. Acad. Sci. U.S.A.">
        <title>Structural basis for RNA recognition by a type II poly(A)-binding protein.</title>
        <authorList>
            <person name="Song J."/>
            <person name="McGivern J.V."/>
            <person name="Nichols K.W."/>
            <person name="Markley J.L."/>
            <person name="Sheets M.D."/>
        </authorList>
    </citation>
    <scope>STRUCTURE BY NMR OF 60-180</scope>
    <scope>SUBUNIT</scope>
</reference>
<sequence length="218" mass="24270">MSERVSEEPGLDKGDRAEECELDDPELKAIRMRVREMEEEAERLKGLSGQDKSIGVSTRPCMQTTHSKMTAGAYTEGPPQPLSAEEKKEIDKRSVYVGNVDYGSTAQDLEAHFSSCGSINRITILCDKFSGHPKGYAYIEFAERNSVDAAVAMDETVFRGRTIKVLPKRTNMPGISSTDRGGFRGRPRGNRGNYQRGQRPRGRPFRGRGRPGPLNNPY</sequence>
<proteinExistence type="evidence at protein level"/>
<name>EPA2B_XENLA</name>
<gene>
    <name type="primary">Pabpn1l-b</name>
    <name type="synonym">epabp2-b</name>
    <name type="synonym">pabpnl1-b</name>
</gene>
<organism>
    <name type="scientific">Xenopus laevis</name>
    <name type="common">African clawed frog</name>
    <dbReference type="NCBI Taxonomy" id="8355"/>
    <lineage>
        <taxon>Eukaryota</taxon>
        <taxon>Metazoa</taxon>
        <taxon>Chordata</taxon>
        <taxon>Craniata</taxon>
        <taxon>Vertebrata</taxon>
        <taxon>Euteleostomi</taxon>
        <taxon>Amphibia</taxon>
        <taxon>Batrachia</taxon>
        <taxon>Anura</taxon>
        <taxon>Pipoidea</taxon>
        <taxon>Pipidae</taxon>
        <taxon>Xenopodinae</taxon>
        <taxon>Xenopus</taxon>
        <taxon>Xenopus</taxon>
    </lineage>
</organism>
<keyword id="KW-0002">3D-structure</keyword>
<keyword id="KW-0963">Cytoplasm</keyword>
<keyword id="KW-1185">Reference proteome</keyword>
<keyword id="KW-0694">RNA-binding</keyword>
<accession>Q6TY21</accession>
<evidence type="ECO:0000250" key="1">
    <source>
        <dbReference type="UniProtKB" id="Q804A5"/>
    </source>
</evidence>
<evidence type="ECO:0000255" key="2">
    <source>
        <dbReference type="PROSITE-ProRule" id="PRU00176"/>
    </source>
</evidence>
<evidence type="ECO:0000256" key="3">
    <source>
        <dbReference type="SAM" id="MobiDB-lite"/>
    </source>
</evidence>
<evidence type="ECO:0000269" key="4">
    <source>
    </source>
</evidence>
<evidence type="ECO:0000269" key="5">
    <source>
    </source>
</evidence>
<evidence type="ECO:0000305" key="6"/>
<evidence type="ECO:0000312" key="7">
    <source>
        <dbReference type="EMBL" id="AAR26263.1"/>
    </source>
</evidence>
<evidence type="ECO:0007829" key="8">
    <source>
        <dbReference type="PDB" id="2JWN"/>
    </source>
</evidence>
<comment type="function">
    <text evidence="1 4">Binds the poly(A) tail of mRNA. Unable to interact with the cap-binding complex and is therefore unlikely to be involved in translation initiation.</text>
</comment>
<comment type="subunit">
    <text evidence="5">Homodimer; Upon poly(A) binding, undergoes a dimer-monomer transition that removes the polyproline motif from the RNA recognition site and allows it to be replaced by the adenosine nucleotides of poly(A).</text>
</comment>
<comment type="subcellular location">
    <subcellularLocation>
        <location evidence="4">Cytoplasm</location>
    </subcellularLocation>
</comment>
<comment type="developmental stage">
    <text evidence="4">Expressed both maternally and zygotically. Restricted to oogenesis, early embryogenesis and the adult ovary. Levels decrease after the onset of zygotic transcription (at protein level).</text>
</comment>
<dbReference type="EMBL" id="AY382837">
    <property type="protein sequence ID" value="AAR26263.1"/>
    <property type="molecule type" value="mRNA"/>
</dbReference>
<dbReference type="RefSeq" id="NP_001084418.1">
    <property type="nucleotide sequence ID" value="NM_001090949.1"/>
</dbReference>
<dbReference type="PDB" id="2JWN">
    <property type="method" value="NMR"/>
    <property type="chains" value="A/B=60-180"/>
</dbReference>
<dbReference type="PDBsum" id="2JWN"/>
<dbReference type="BMRB" id="Q6TY21"/>
<dbReference type="SMR" id="Q6TY21"/>
<dbReference type="GeneID" id="403372"/>
<dbReference type="KEGG" id="xla:403372"/>
<dbReference type="AGR" id="Xenbase:XB-GENE-1000606"/>
<dbReference type="CTD" id="403372"/>
<dbReference type="Xenbase" id="XB-GENE-1000606">
    <property type="gene designation" value="pabpn1l.S"/>
</dbReference>
<dbReference type="OrthoDB" id="4726at2759"/>
<dbReference type="EvolutionaryTrace" id="Q6TY21"/>
<dbReference type="Proteomes" id="UP000186698">
    <property type="component" value="Chromosome 4S"/>
</dbReference>
<dbReference type="Bgee" id="403372">
    <property type="expression patterns" value="Expressed in oocyte and 6 other cell types or tissues"/>
</dbReference>
<dbReference type="GO" id="GO:0005737">
    <property type="term" value="C:cytoplasm"/>
    <property type="evidence" value="ECO:0000314"/>
    <property type="project" value="UniProtKB"/>
</dbReference>
<dbReference type="GO" id="GO:0005634">
    <property type="term" value="C:nucleus"/>
    <property type="evidence" value="ECO:0000318"/>
    <property type="project" value="GO_Central"/>
</dbReference>
<dbReference type="GO" id="GO:0008143">
    <property type="term" value="F:poly(A) binding"/>
    <property type="evidence" value="ECO:0000314"/>
    <property type="project" value="UniProtKB"/>
</dbReference>
<dbReference type="GO" id="GO:0000288">
    <property type="term" value="P:nuclear-transcribed mRNA catabolic process, deadenylation-dependent decay"/>
    <property type="evidence" value="ECO:0000318"/>
    <property type="project" value="GO_Central"/>
</dbReference>
<dbReference type="CDD" id="cd12551">
    <property type="entry name" value="RRM_II_PABPN1L"/>
    <property type="match status" value="1"/>
</dbReference>
<dbReference type="FunFam" id="3.30.70.330:FF:000311">
    <property type="entry name" value="polyadenylate-binding protein 2"/>
    <property type="match status" value="1"/>
</dbReference>
<dbReference type="Gene3D" id="3.30.70.330">
    <property type="match status" value="1"/>
</dbReference>
<dbReference type="InterPro" id="IPR012677">
    <property type="entry name" value="Nucleotide-bd_a/b_plait_sf"/>
</dbReference>
<dbReference type="InterPro" id="IPR035979">
    <property type="entry name" value="RBD_domain_sf"/>
</dbReference>
<dbReference type="InterPro" id="IPR000504">
    <property type="entry name" value="RRM_dom"/>
</dbReference>
<dbReference type="PANTHER" id="PTHR23236:SF27">
    <property type="entry name" value="EMBRYONIC POLYADENYLATE-BINDING PROTEIN 2"/>
    <property type="match status" value="1"/>
</dbReference>
<dbReference type="PANTHER" id="PTHR23236">
    <property type="entry name" value="EUKARYOTIC TRANSLATION INITIATION FACTOR 4B/4H"/>
    <property type="match status" value="1"/>
</dbReference>
<dbReference type="Pfam" id="PF00076">
    <property type="entry name" value="RRM_1"/>
    <property type="match status" value="1"/>
</dbReference>
<dbReference type="SMART" id="SM00360">
    <property type="entry name" value="RRM"/>
    <property type="match status" value="1"/>
</dbReference>
<dbReference type="SUPFAM" id="SSF54928">
    <property type="entry name" value="RNA-binding domain, RBD"/>
    <property type="match status" value="1"/>
</dbReference>
<dbReference type="PROSITE" id="PS50102">
    <property type="entry name" value="RRM"/>
    <property type="match status" value="1"/>
</dbReference>
<feature type="chain" id="PRO_0000239464" description="Embryonic polyadenylate-binding protein 2-B">
    <location>
        <begin position="1"/>
        <end position="218"/>
    </location>
</feature>
<feature type="domain" description="RRM" evidence="2">
    <location>
        <begin position="93"/>
        <end position="170"/>
    </location>
</feature>
<feature type="region of interest" description="Disordered" evidence="3">
    <location>
        <begin position="1"/>
        <end position="24"/>
    </location>
</feature>
<feature type="region of interest" description="Disordered" evidence="3">
    <location>
        <begin position="169"/>
        <end position="218"/>
    </location>
</feature>
<feature type="compositionally biased region" description="Basic residues" evidence="3">
    <location>
        <begin position="198"/>
        <end position="209"/>
    </location>
</feature>
<feature type="helix" evidence="8">
    <location>
        <begin position="84"/>
        <end position="92"/>
    </location>
</feature>
<feature type="strand" evidence="8">
    <location>
        <begin position="94"/>
        <end position="100"/>
    </location>
</feature>
<feature type="helix" evidence="8">
    <location>
        <begin position="106"/>
        <end position="114"/>
    </location>
</feature>
<feature type="strand" evidence="8">
    <location>
        <begin position="119"/>
        <end position="127"/>
    </location>
</feature>
<feature type="strand" evidence="8">
    <location>
        <begin position="134"/>
        <end position="143"/>
    </location>
</feature>
<feature type="helix" evidence="8">
    <location>
        <begin position="144"/>
        <end position="151"/>
    </location>
</feature>
<feature type="turn" evidence="8">
    <location>
        <begin position="152"/>
        <end position="155"/>
    </location>
</feature>
<feature type="strand" evidence="8">
    <location>
        <begin position="164"/>
        <end position="169"/>
    </location>
</feature>